<reference key="1">
    <citation type="journal article" date="2005" name="Nucleic Acids Res.">
        <title>Genome dynamics and diversity of Shigella species, the etiologic agents of bacillary dysentery.</title>
        <authorList>
            <person name="Yang F."/>
            <person name="Yang J."/>
            <person name="Zhang X."/>
            <person name="Chen L."/>
            <person name="Jiang Y."/>
            <person name="Yan Y."/>
            <person name="Tang X."/>
            <person name="Wang J."/>
            <person name="Xiong Z."/>
            <person name="Dong J."/>
            <person name="Xue Y."/>
            <person name="Zhu Y."/>
            <person name="Xu X."/>
            <person name="Sun L."/>
            <person name="Chen S."/>
            <person name="Nie H."/>
            <person name="Peng J."/>
            <person name="Xu J."/>
            <person name="Wang Y."/>
            <person name="Yuan Z."/>
            <person name="Wen Y."/>
            <person name="Yao Z."/>
            <person name="Shen Y."/>
            <person name="Qiang B."/>
            <person name="Hou Y."/>
            <person name="Yu J."/>
            <person name="Jin Q."/>
        </authorList>
    </citation>
    <scope>NUCLEOTIDE SEQUENCE [LARGE SCALE GENOMIC DNA]</scope>
    <source>
        <strain>Ss046</strain>
    </source>
</reference>
<dbReference type="EMBL" id="CP000038">
    <property type="protein sequence ID" value="AAZ86921.1"/>
    <property type="molecule type" value="Genomic_DNA"/>
</dbReference>
<dbReference type="RefSeq" id="WP_000384306.1">
    <property type="nucleotide sequence ID" value="NC_007384.1"/>
</dbReference>
<dbReference type="GeneID" id="93777317"/>
<dbReference type="KEGG" id="ssn:SSON_0127"/>
<dbReference type="HOGENOM" id="CLU_139226_0_0_6"/>
<dbReference type="Proteomes" id="UP000002529">
    <property type="component" value="Chromosome"/>
</dbReference>
<dbReference type="HAMAP" id="MF_01053">
    <property type="entry name" value="UPF0231"/>
    <property type="match status" value="1"/>
</dbReference>
<dbReference type="InterPro" id="IPR008249">
    <property type="entry name" value="UPF0231"/>
</dbReference>
<dbReference type="NCBIfam" id="NF003574">
    <property type="entry name" value="PRK05248.1-1"/>
    <property type="match status" value="1"/>
</dbReference>
<dbReference type="NCBIfam" id="NF003576">
    <property type="entry name" value="PRK05248.1-3"/>
    <property type="match status" value="1"/>
</dbReference>
<dbReference type="Pfam" id="PF06062">
    <property type="entry name" value="UPF0231"/>
    <property type="match status" value="1"/>
</dbReference>
<dbReference type="PIRSF" id="PIRSF006287">
    <property type="entry name" value="UCP006287"/>
    <property type="match status" value="1"/>
</dbReference>
<organism>
    <name type="scientific">Shigella sonnei (strain Ss046)</name>
    <dbReference type="NCBI Taxonomy" id="300269"/>
    <lineage>
        <taxon>Bacteria</taxon>
        <taxon>Pseudomonadati</taxon>
        <taxon>Pseudomonadota</taxon>
        <taxon>Gammaproteobacteria</taxon>
        <taxon>Enterobacterales</taxon>
        <taxon>Enterobacteriaceae</taxon>
        <taxon>Shigella</taxon>
    </lineage>
</organism>
<gene>
    <name evidence="1" type="primary">yacL</name>
    <name type="ordered locus">SSON_0127</name>
</gene>
<comment type="similarity">
    <text evidence="1">Belongs to the UPF0231 family.</text>
</comment>
<protein>
    <recommendedName>
        <fullName evidence="1">UPF0231 protein YacL</fullName>
    </recommendedName>
</protein>
<proteinExistence type="inferred from homology"/>
<name>YACL_SHISS</name>
<keyword id="KW-1185">Reference proteome</keyword>
<feature type="chain" id="PRO_1000064371" description="UPF0231 protein YacL">
    <location>
        <begin position="1"/>
        <end position="120"/>
    </location>
</feature>
<accession>Q3Z5P1</accession>
<evidence type="ECO:0000255" key="1">
    <source>
        <dbReference type="HAMAP-Rule" id="MF_01053"/>
    </source>
</evidence>
<sequence>MDYEFLRDITGVVKVRMSMGHEVVGHWFNEEVKENLALLDEVEQAAHALKGSERSWQRAGHEYTLWMDGEEVMVRANQLEFAGDEMEEGMNYYDEESLSLCGVEDFLQVVAAYRNFVQQK</sequence>